<sequence length="79" mass="8699">MKTLLLTLVMVTIMCLDLGYTLTCYKGYHDTVVCKPHETICYEYFIPATHGNVITTRGCSTSCPGGIRPVCCSTDLCNN</sequence>
<dbReference type="EMBL" id="DQ917506">
    <property type="protein sequence ID" value="ABK63535.1"/>
    <property type="molecule type" value="mRNA"/>
</dbReference>
<dbReference type="SMR" id="A8HDK1"/>
<dbReference type="Proteomes" id="UP000472273">
    <property type="component" value="Unplaced"/>
</dbReference>
<dbReference type="GO" id="GO:0005576">
    <property type="term" value="C:extracellular region"/>
    <property type="evidence" value="ECO:0007669"/>
    <property type="project" value="UniProtKB-SubCell"/>
</dbReference>
<dbReference type="GO" id="GO:0030550">
    <property type="term" value="F:acetylcholine receptor inhibitor activity"/>
    <property type="evidence" value="ECO:0007669"/>
    <property type="project" value="UniProtKB-KW"/>
</dbReference>
<dbReference type="GO" id="GO:0099106">
    <property type="term" value="F:ion channel regulator activity"/>
    <property type="evidence" value="ECO:0007669"/>
    <property type="project" value="UniProtKB-KW"/>
</dbReference>
<dbReference type="GO" id="GO:0090729">
    <property type="term" value="F:toxin activity"/>
    <property type="evidence" value="ECO:0007669"/>
    <property type="project" value="UniProtKB-KW"/>
</dbReference>
<dbReference type="CDD" id="cd00206">
    <property type="entry name" value="TFP_snake_toxin"/>
    <property type="match status" value="1"/>
</dbReference>
<dbReference type="Gene3D" id="2.10.60.10">
    <property type="entry name" value="CD59"/>
    <property type="match status" value="1"/>
</dbReference>
<dbReference type="InterPro" id="IPR003571">
    <property type="entry name" value="Snake_3FTx"/>
</dbReference>
<dbReference type="InterPro" id="IPR045860">
    <property type="entry name" value="Snake_toxin-like_sf"/>
</dbReference>
<dbReference type="InterPro" id="IPR054131">
    <property type="entry name" value="Toxin_cobra-type"/>
</dbReference>
<dbReference type="Pfam" id="PF21947">
    <property type="entry name" value="Toxin_cobra-type"/>
    <property type="match status" value="1"/>
</dbReference>
<dbReference type="SUPFAM" id="SSF57302">
    <property type="entry name" value="Snake toxin-like"/>
    <property type="match status" value="1"/>
</dbReference>
<evidence type="ECO:0000250" key="1"/>
<evidence type="ECO:0000250" key="2">
    <source>
        <dbReference type="UniProtKB" id="P60301"/>
    </source>
</evidence>
<evidence type="ECO:0000250" key="3">
    <source>
        <dbReference type="UniProtKB" id="Q9W7K2"/>
    </source>
</evidence>
<evidence type="ECO:0000305" key="4"/>
<keyword id="KW-0008">Acetylcholine receptor inhibiting toxin</keyword>
<keyword id="KW-1015">Disulfide bond</keyword>
<keyword id="KW-0872">Ion channel impairing toxin</keyword>
<keyword id="KW-0528">Neurotoxin</keyword>
<keyword id="KW-0629">Postsynaptic neurotoxin</keyword>
<keyword id="KW-1185">Reference proteome</keyword>
<keyword id="KW-0964">Secreted</keyword>
<keyword id="KW-0732">Signal</keyword>
<keyword id="KW-0800">Toxin</keyword>
<accession>A8HDK1</accession>
<name>3S38_PSETE</name>
<proteinExistence type="inferred from homology"/>
<organism>
    <name type="scientific">Pseudonaja textilis</name>
    <name type="common">Eastern brown snake</name>
    <dbReference type="NCBI Taxonomy" id="8673"/>
    <lineage>
        <taxon>Eukaryota</taxon>
        <taxon>Metazoa</taxon>
        <taxon>Chordata</taxon>
        <taxon>Craniata</taxon>
        <taxon>Vertebrata</taxon>
        <taxon>Euteleostomi</taxon>
        <taxon>Lepidosauria</taxon>
        <taxon>Squamata</taxon>
        <taxon>Bifurcata</taxon>
        <taxon>Unidentata</taxon>
        <taxon>Episquamata</taxon>
        <taxon>Toxicofera</taxon>
        <taxon>Serpentes</taxon>
        <taxon>Colubroidea</taxon>
        <taxon>Elapidae</taxon>
        <taxon>Hydrophiinae</taxon>
        <taxon>Pseudonaja</taxon>
    </lineage>
</organism>
<comment type="function">
    <text evidence="3">Binds with high affinity to muscle nicotinic acetylcholine receptor (nAChR) and hinders acetylcholine binding to the receptor, thereby impairing neuromuscular transmission. Causes muscle paralysis, spasms and increased respiration.</text>
</comment>
<comment type="subcellular location">
    <subcellularLocation>
        <location evidence="1">Secreted</location>
    </subcellularLocation>
</comment>
<comment type="tissue specificity">
    <text evidence="4">Expressed by the venom gland.</text>
</comment>
<comment type="similarity">
    <text evidence="4">Belongs to the three-finger toxin family. Short-chain subfamily. Type III alpha-neurotoxin sub-subfamily.</text>
</comment>
<feature type="signal peptide" evidence="1">
    <location>
        <begin position="1"/>
        <end position="21"/>
    </location>
</feature>
<feature type="chain" id="PRO_5000279914" description="Short neurotoxin 8">
    <location>
        <begin position="22"/>
        <end position="79"/>
    </location>
</feature>
<feature type="disulfide bond" evidence="2">
    <location>
        <begin position="24"/>
        <end position="41"/>
    </location>
</feature>
<feature type="disulfide bond" evidence="2">
    <location>
        <begin position="34"/>
        <end position="59"/>
    </location>
</feature>
<feature type="disulfide bond" evidence="2">
    <location>
        <begin position="63"/>
        <end position="71"/>
    </location>
</feature>
<feature type="disulfide bond" evidence="2">
    <location>
        <begin position="72"/>
        <end position="77"/>
    </location>
</feature>
<protein>
    <recommendedName>
        <fullName>Short neurotoxin 8</fullName>
        <shortName>SNTX8</shortName>
    </recommendedName>
</protein>
<reference key="1">
    <citation type="journal article" date="2007" name="Cell. Mol. Life Sci.">
        <title>Distinct activities of novel neurotoxins from Australian venomous snakes for nicotinic acetylcholine receptors.</title>
        <authorList>
            <person name="St Pierre L."/>
            <person name="Fischer H."/>
            <person name="Adams D.J."/>
            <person name="Schenning M."/>
            <person name="Lavidis N."/>
            <person name="de Jersey J."/>
            <person name="Masci P.P."/>
            <person name="Lavin M.F."/>
        </authorList>
    </citation>
    <scope>NUCLEOTIDE SEQUENCE [MRNA]</scope>
    <source>
        <tissue>Venom gland</tissue>
    </source>
</reference>